<comment type="function">
    <text evidence="1">Involved in the gluconeogenesis. Catalyzes the conversion of oxaloacetate (OAA) to phosphoenolpyruvate (PEP) through direct phosphoryl transfer between the nucleoside triphosphate and OAA.</text>
</comment>
<comment type="catalytic activity">
    <reaction evidence="1">
        <text>oxaloacetate + ATP = phosphoenolpyruvate + ADP + CO2</text>
        <dbReference type="Rhea" id="RHEA:18617"/>
        <dbReference type="ChEBI" id="CHEBI:16452"/>
        <dbReference type="ChEBI" id="CHEBI:16526"/>
        <dbReference type="ChEBI" id="CHEBI:30616"/>
        <dbReference type="ChEBI" id="CHEBI:58702"/>
        <dbReference type="ChEBI" id="CHEBI:456216"/>
        <dbReference type="EC" id="4.1.1.49"/>
    </reaction>
</comment>
<comment type="cofactor">
    <cofactor evidence="1">
        <name>Mn(2+)</name>
        <dbReference type="ChEBI" id="CHEBI:29035"/>
    </cofactor>
    <text evidence="1">Binds 1 Mn(2+) ion per subunit.</text>
</comment>
<comment type="pathway">
    <text evidence="1">Carbohydrate biosynthesis; gluconeogenesis.</text>
</comment>
<comment type="subunit">
    <text evidence="1">Monomer.</text>
</comment>
<comment type="subcellular location">
    <subcellularLocation>
        <location evidence="1">Cytoplasm</location>
    </subcellularLocation>
</comment>
<comment type="similarity">
    <text evidence="1">Belongs to the phosphoenolpyruvate carboxykinase (ATP) family.</text>
</comment>
<gene>
    <name evidence="1" type="primary">pckA</name>
    <name type="ordered locus">Maqu_3754</name>
</gene>
<sequence>MSNTYNDLSTARLVELALARNEGQLASNGSLVVTTGERTGRSPMDRFIVEEPSTADDIHWGPINRPFDAEKFDALWDRVEAYIAEKDRFVSHVHVGSDPEHYLPVKMTTETAWQNLFGRNLFIRPDSFNPADKQEWQILNAANFECVPERDGTNSNGCVIINFAKRKVLLAGMHYAGEMKKAMFSVQNFLLPEKDVLPMHCSANVSETGETCLFFGLSGTGKTTLSADPHRFLIGDDEHGWGPGTVFNIEGGCYAKCIDLSQKNEPIIWDAIRFGAIVENVMIDPETREPDYNDVSLTENSRCAYPLEHVEKRVIENRAGEPSHIIFLTCDMTGVLPPVSILSREAAAYHFLSGYTALVGSTEMGSSSKLKSTFSTCFGAPFFPRPAGVYAELLMKRIDEFGSKVFLVNTGWTGGPYGEGKRFSIPTTRAIIAAIQNGDLDDVETEHLDALNLDVPKHVPGVDTELLNPRTTWVSPDYYDGKAQELIAQFVENFKKFDVADAIVEAGPKAG</sequence>
<feature type="chain" id="PRO_1000026330" description="Phosphoenolpyruvate carboxykinase (ATP)">
    <location>
        <begin position="1"/>
        <end position="511"/>
    </location>
</feature>
<feature type="binding site" evidence="1">
    <location>
        <position position="41"/>
    </location>
    <ligand>
        <name>substrate</name>
    </ligand>
</feature>
<feature type="binding site" evidence="1">
    <location>
        <position position="175"/>
    </location>
    <ligand>
        <name>substrate</name>
    </ligand>
</feature>
<feature type="binding site" evidence="1">
    <location>
        <position position="181"/>
    </location>
    <ligand>
        <name>ATP</name>
        <dbReference type="ChEBI" id="CHEBI:30616"/>
    </ligand>
</feature>
<feature type="binding site" evidence="1">
    <location>
        <position position="181"/>
    </location>
    <ligand>
        <name>Mn(2+)</name>
        <dbReference type="ChEBI" id="CHEBI:29035"/>
    </ligand>
</feature>
<feature type="binding site" evidence="1">
    <location>
        <position position="181"/>
    </location>
    <ligand>
        <name>substrate</name>
    </ligand>
</feature>
<feature type="binding site" evidence="1">
    <location>
        <position position="200"/>
    </location>
    <ligand>
        <name>ATP</name>
        <dbReference type="ChEBI" id="CHEBI:30616"/>
    </ligand>
</feature>
<feature type="binding site" evidence="1">
    <location>
        <position position="200"/>
    </location>
    <ligand>
        <name>Mn(2+)</name>
        <dbReference type="ChEBI" id="CHEBI:29035"/>
    </ligand>
</feature>
<feature type="binding site" evidence="1">
    <location>
        <begin position="216"/>
        <end position="224"/>
    </location>
    <ligand>
        <name>ATP</name>
        <dbReference type="ChEBI" id="CHEBI:30616"/>
    </ligand>
</feature>
<feature type="binding site" evidence="1">
    <location>
        <position position="237"/>
    </location>
    <ligand>
        <name>Mn(2+)</name>
        <dbReference type="ChEBI" id="CHEBI:29035"/>
    </ligand>
</feature>
<feature type="binding site" evidence="1">
    <location>
        <position position="265"/>
    </location>
    <ligand>
        <name>ATP</name>
        <dbReference type="ChEBI" id="CHEBI:30616"/>
    </ligand>
</feature>
<feature type="binding site" evidence="1">
    <location>
        <position position="302"/>
    </location>
    <ligand>
        <name>ATP</name>
        <dbReference type="ChEBI" id="CHEBI:30616"/>
    </ligand>
</feature>
<feature type="binding site" evidence="1">
    <location>
        <position position="302"/>
    </location>
    <ligand>
        <name>substrate</name>
    </ligand>
</feature>
<feature type="binding site" evidence="1">
    <location>
        <position position="428"/>
    </location>
    <ligand>
        <name>ATP</name>
        <dbReference type="ChEBI" id="CHEBI:30616"/>
    </ligand>
</feature>
<protein>
    <recommendedName>
        <fullName evidence="1">Phosphoenolpyruvate carboxykinase (ATP)</fullName>
        <shortName evidence="1">PCK</shortName>
        <shortName evidence="1">PEP carboxykinase</shortName>
        <shortName evidence="1">PEPCK</shortName>
        <ecNumber evidence="1">4.1.1.49</ecNumber>
    </recommendedName>
</protein>
<reference key="1">
    <citation type="journal article" date="2011" name="Appl. Environ. Microbiol.">
        <title>Genomic potential of Marinobacter aquaeolei, a biogeochemical 'opportunitroph'.</title>
        <authorList>
            <person name="Singer E."/>
            <person name="Webb E.A."/>
            <person name="Nelson W.C."/>
            <person name="Heidelberg J.F."/>
            <person name="Ivanova N."/>
            <person name="Pati A."/>
            <person name="Edwards K.J."/>
        </authorList>
    </citation>
    <scope>NUCLEOTIDE SEQUENCE [LARGE SCALE GENOMIC DNA]</scope>
    <source>
        <strain>ATCC 700491 / DSM 11845 / VT8</strain>
    </source>
</reference>
<dbReference type="EC" id="4.1.1.49" evidence="1"/>
<dbReference type="EMBL" id="CP000514">
    <property type="protein sequence ID" value="ABM20823.1"/>
    <property type="molecule type" value="Genomic_DNA"/>
</dbReference>
<dbReference type="RefSeq" id="WP_011787158.1">
    <property type="nucleotide sequence ID" value="NC_008740.1"/>
</dbReference>
<dbReference type="SMR" id="A1U754"/>
<dbReference type="STRING" id="351348.Maqu_3754"/>
<dbReference type="GeneID" id="31822989"/>
<dbReference type="KEGG" id="maq:Maqu_3754"/>
<dbReference type="eggNOG" id="COG1866">
    <property type="taxonomic scope" value="Bacteria"/>
</dbReference>
<dbReference type="HOGENOM" id="CLU_018247_0_1_6"/>
<dbReference type="OrthoDB" id="9806325at2"/>
<dbReference type="UniPathway" id="UPA00138"/>
<dbReference type="Proteomes" id="UP000000998">
    <property type="component" value="Chromosome"/>
</dbReference>
<dbReference type="GO" id="GO:0005829">
    <property type="term" value="C:cytosol"/>
    <property type="evidence" value="ECO:0007669"/>
    <property type="project" value="TreeGrafter"/>
</dbReference>
<dbReference type="GO" id="GO:0005524">
    <property type="term" value="F:ATP binding"/>
    <property type="evidence" value="ECO:0007669"/>
    <property type="project" value="UniProtKB-UniRule"/>
</dbReference>
<dbReference type="GO" id="GO:0046872">
    <property type="term" value="F:metal ion binding"/>
    <property type="evidence" value="ECO:0007669"/>
    <property type="project" value="UniProtKB-KW"/>
</dbReference>
<dbReference type="GO" id="GO:0004612">
    <property type="term" value="F:phosphoenolpyruvate carboxykinase (ATP) activity"/>
    <property type="evidence" value="ECO:0007669"/>
    <property type="project" value="UniProtKB-UniRule"/>
</dbReference>
<dbReference type="GO" id="GO:0006094">
    <property type="term" value="P:gluconeogenesis"/>
    <property type="evidence" value="ECO:0007669"/>
    <property type="project" value="UniProtKB-UniRule"/>
</dbReference>
<dbReference type="CDD" id="cd00484">
    <property type="entry name" value="PEPCK_ATP"/>
    <property type="match status" value="1"/>
</dbReference>
<dbReference type="FunFam" id="2.170.8.10:FF:000001">
    <property type="entry name" value="Phosphoenolpyruvate carboxykinase (ATP)"/>
    <property type="match status" value="1"/>
</dbReference>
<dbReference type="Gene3D" id="3.90.228.20">
    <property type="match status" value="1"/>
</dbReference>
<dbReference type="Gene3D" id="3.40.449.10">
    <property type="entry name" value="Phosphoenolpyruvate Carboxykinase, domain 1"/>
    <property type="match status" value="1"/>
</dbReference>
<dbReference type="Gene3D" id="2.170.8.10">
    <property type="entry name" value="Phosphoenolpyruvate Carboxykinase, domain 2"/>
    <property type="match status" value="1"/>
</dbReference>
<dbReference type="HAMAP" id="MF_00453">
    <property type="entry name" value="PEPCK_ATP"/>
    <property type="match status" value="1"/>
</dbReference>
<dbReference type="InterPro" id="IPR001272">
    <property type="entry name" value="PEP_carboxykinase_ATP"/>
</dbReference>
<dbReference type="InterPro" id="IPR013035">
    <property type="entry name" value="PEP_carboxykinase_C"/>
</dbReference>
<dbReference type="InterPro" id="IPR008210">
    <property type="entry name" value="PEP_carboxykinase_N"/>
</dbReference>
<dbReference type="NCBIfam" id="TIGR00224">
    <property type="entry name" value="pckA"/>
    <property type="match status" value="1"/>
</dbReference>
<dbReference type="NCBIfam" id="NF006820">
    <property type="entry name" value="PRK09344.1-2"/>
    <property type="match status" value="1"/>
</dbReference>
<dbReference type="NCBIfam" id="NF006821">
    <property type="entry name" value="PRK09344.1-3"/>
    <property type="match status" value="1"/>
</dbReference>
<dbReference type="NCBIfam" id="NF006823">
    <property type="entry name" value="PRK09344.1-5"/>
    <property type="match status" value="1"/>
</dbReference>
<dbReference type="PANTHER" id="PTHR30031:SF0">
    <property type="entry name" value="PHOSPHOENOLPYRUVATE CARBOXYKINASE (ATP)"/>
    <property type="match status" value="1"/>
</dbReference>
<dbReference type="PANTHER" id="PTHR30031">
    <property type="entry name" value="PHOSPHOENOLPYRUVATE CARBOXYKINASE ATP"/>
    <property type="match status" value="1"/>
</dbReference>
<dbReference type="Pfam" id="PF01293">
    <property type="entry name" value="PEPCK_ATP"/>
    <property type="match status" value="1"/>
</dbReference>
<dbReference type="PIRSF" id="PIRSF006294">
    <property type="entry name" value="PEP_crbxkin"/>
    <property type="match status" value="1"/>
</dbReference>
<dbReference type="SUPFAM" id="SSF68923">
    <property type="entry name" value="PEP carboxykinase N-terminal domain"/>
    <property type="match status" value="1"/>
</dbReference>
<dbReference type="SUPFAM" id="SSF53795">
    <property type="entry name" value="PEP carboxykinase-like"/>
    <property type="match status" value="1"/>
</dbReference>
<proteinExistence type="inferred from homology"/>
<organism>
    <name type="scientific">Marinobacter nauticus (strain ATCC 700491 / DSM 11845 / VT8)</name>
    <name type="common">Marinobacter aquaeolei</name>
    <dbReference type="NCBI Taxonomy" id="351348"/>
    <lineage>
        <taxon>Bacteria</taxon>
        <taxon>Pseudomonadati</taxon>
        <taxon>Pseudomonadota</taxon>
        <taxon>Gammaproteobacteria</taxon>
        <taxon>Pseudomonadales</taxon>
        <taxon>Marinobacteraceae</taxon>
        <taxon>Marinobacter</taxon>
    </lineage>
</organism>
<evidence type="ECO:0000255" key="1">
    <source>
        <dbReference type="HAMAP-Rule" id="MF_00453"/>
    </source>
</evidence>
<accession>A1U754</accession>
<keyword id="KW-0067">ATP-binding</keyword>
<keyword id="KW-0963">Cytoplasm</keyword>
<keyword id="KW-0210">Decarboxylase</keyword>
<keyword id="KW-0312">Gluconeogenesis</keyword>
<keyword id="KW-0456">Lyase</keyword>
<keyword id="KW-0464">Manganese</keyword>
<keyword id="KW-0479">Metal-binding</keyword>
<keyword id="KW-0547">Nucleotide-binding</keyword>
<name>PCKA_MARN8</name>